<organism>
    <name type="scientific">Streptomyces avermitilis (strain ATCC 31267 / DSM 46492 / JCM 5070 / NBRC 14893 / NCIMB 12804 / NRRL 8165 / MA-4680)</name>
    <dbReference type="NCBI Taxonomy" id="227882"/>
    <lineage>
        <taxon>Bacteria</taxon>
        <taxon>Bacillati</taxon>
        <taxon>Actinomycetota</taxon>
        <taxon>Actinomycetes</taxon>
        <taxon>Kitasatosporales</taxon>
        <taxon>Streptomycetaceae</taxon>
        <taxon>Streptomyces</taxon>
    </lineage>
</organism>
<evidence type="ECO:0000255" key="1">
    <source>
        <dbReference type="HAMAP-Rule" id="MF_00094"/>
    </source>
</evidence>
<gene>
    <name evidence="1" type="primary">prfB</name>
    <name type="ordered locus">SAV_5102</name>
</gene>
<proteinExistence type="inferred from homology"/>
<reference key="1">
    <citation type="journal article" date="2003" name="Nat. Biotechnol.">
        <title>Complete genome sequence and comparative analysis of the industrial microorganism Streptomyces avermitilis.</title>
        <authorList>
            <person name="Ikeda H."/>
            <person name="Ishikawa J."/>
            <person name="Hanamoto A."/>
            <person name="Shinose M."/>
            <person name="Kikuchi H."/>
            <person name="Shiba T."/>
            <person name="Sakaki Y."/>
            <person name="Hattori M."/>
            <person name="Omura S."/>
        </authorList>
    </citation>
    <scope>NUCLEOTIDE SEQUENCE [LARGE SCALE GENOMIC DNA]</scope>
    <source>
        <strain>ATCC 31267 / DSM 46492 / JCM 5070 / NBRC 14893 / NCIMB 12804 / NRRL 8165 / MA-4680</strain>
    </source>
</reference>
<reference key="2">
    <citation type="journal article" date="2001" name="Proc. Natl. Acad. Sci. U.S.A.">
        <title>Genome sequence of an industrial microorganism Streptomyces avermitilis: deducing the ability of producing secondary metabolites.</title>
        <authorList>
            <person name="Omura S."/>
            <person name="Ikeda H."/>
            <person name="Ishikawa J."/>
            <person name="Hanamoto A."/>
            <person name="Takahashi C."/>
            <person name="Shinose M."/>
            <person name="Takahashi Y."/>
            <person name="Horikawa H."/>
            <person name="Nakazawa H."/>
            <person name="Osonoe T."/>
            <person name="Kikuchi H."/>
            <person name="Shiba T."/>
            <person name="Sakaki Y."/>
            <person name="Hattori M."/>
        </authorList>
    </citation>
    <scope>NUCLEOTIDE SEQUENCE [LARGE SCALE GENOMIC DNA]</scope>
    <source>
        <strain>ATCC 31267 / DSM 46492 / JCM 5070 / NBRC 14893 / NCIMB 12804 / NRRL 8165 / MA-4680</strain>
    </source>
</reference>
<accession>Q82D82</accession>
<dbReference type="EMBL" id="BA000030">
    <property type="protein sequence ID" value="BAC72814.1"/>
    <property type="molecule type" value="Genomic_DNA"/>
</dbReference>
<dbReference type="RefSeq" id="WP_010986507.1">
    <property type="nucleotide sequence ID" value="NZ_JZJK01000072.1"/>
</dbReference>
<dbReference type="SMR" id="Q82D82"/>
<dbReference type="GeneID" id="41542185"/>
<dbReference type="KEGG" id="sma:SAVERM_5102"/>
<dbReference type="eggNOG" id="COG1186">
    <property type="taxonomic scope" value="Bacteria"/>
</dbReference>
<dbReference type="HOGENOM" id="CLU_036856_6_0_11"/>
<dbReference type="OrthoDB" id="9806673at2"/>
<dbReference type="Proteomes" id="UP000000428">
    <property type="component" value="Chromosome"/>
</dbReference>
<dbReference type="GO" id="GO:0005737">
    <property type="term" value="C:cytoplasm"/>
    <property type="evidence" value="ECO:0007669"/>
    <property type="project" value="UniProtKB-SubCell"/>
</dbReference>
<dbReference type="GO" id="GO:0016149">
    <property type="term" value="F:translation release factor activity, codon specific"/>
    <property type="evidence" value="ECO:0007669"/>
    <property type="project" value="UniProtKB-UniRule"/>
</dbReference>
<dbReference type="FunFam" id="3.30.160.20:FF:000010">
    <property type="entry name" value="Peptide chain release factor 2"/>
    <property type="match status" value="1"/>
</dbReference>
<dbReference type="Gene3D" id="3.30.160.20">
    <property type="match status" value="1"/>
</dbReference>
<dbReference type="Gene3D" id="3.30.70.1660">
    <property type="match status" value="1"/>
</dbReference>
<dbReference type="Gene3D" id="1.20.58.410">
    <property type="entry name" value="Release factor"/>
    <property type="match status" value="1"/>
</dbReference>
<dbReference type="HAMAP" id="MF_00094">
    <property type="entry name" value="Rel_fac_2"/>
    <property type="match status" value="1"/>
</dbReference>
<dbReference type="InterPro" id="IPR005139">
    <property type="entry name" value="PCRF"/>
</dbReference>
<dbReference type="InterPro" id="IPR000352">
    <property type="entry name" value="Pep_chain_release_fac_I"/>
</dbReference>
<dbReference type="InterPro" id="IPR045853">
    <property type="entry name" value="Pep_chain_release_fac_I_sf"/>
</dbReference>
<dbReference type="InterPro" id="IPR004374">
    <property type="entry name" value="PrfB"/>
</dbReference>
<dbReference type="NCBIfam" id="TIGR00020">
    <property type="entry name" value="prfB"/>
    <property type="match status" value="1"/>
</dbReference>
<dbReference type="PANTHER" id="PTHR43116:SF3">
    <property type="entry name" value="CLASS I PEPTIDE CHAIN RELEASE FACTOR"/>
    <property type="match status" value="1"/>
</dbReference>
<dbReference type="PANTHER" id="PTHR43116">
    <property type="entry name" value="PEPTIDE CHAIN RELEASE FACTOR 2"/>
    <property type="match status" value="1"/>
</dbReference>
<dbReference type="Pfam" id="PF03462">
    <property type="entry name" value="PCRF"/>
    <property type="match status" value="1"/>
</dbReference>
<dbReference type="Pfam" id="PF00472">
    <property type="entry name" value="RF-1"/>
    <property type="match status" value="1"/>
</dbReference>
<dbReference type="SMART" id="SM00937">
    <property type="entry name" value="PCRF"/>
    <property type="match status" value="1"/>
</dbReference>
<dbReference type="SUPFAM" id="SSF75620">
    <property type="entry name" value="Release factor"/>
    <property type="match status" value="1"/>
</dbReference>
<dbReference type="PROSITE" id="PS00745">
    <property type="entry name" value="RF_PROK_I"/>
    <property type="match status" value="1"/>
</dbReference>
<comment type="function">
    <text evidence="1">Peptide chain release factor 2 directs the termination of translation in response to the peptide chain termination codons UGA and UAA.</text>
</comment>
<comment type="subcellular location">
    <subcellularLocation>
        <location evidence="1">Cytoplasm</location>
    </subcellularLocation>
</comment>
<comment type="PTM">
    <text evidence="1">Methylated by PrmC. Methylation increases the termination efficiency of RF2.</text>
</comment>
<comment type="similarity">
    <text evidence="1">Belongs to the prokaryotic/mitochondrial release factor family.</text>
</comment>
<feature type="chain" id="PRO_1000005013" description="Peptide chain release factor 2">
    <location>
        <begin position="1"/>
        <end position="368"/>
    </location>
</feature>
<feature type="modified residue" description="N5-methylglutamine" evidence="1">
    <location>
        <position position="251"/>
    </location>
</feature>
<sequence length="368" mass="41107">MAVVDVSEELKSLSSTMESIEAVLDLDKLRADIAVLEEQAAAPSLWDDPEAAQKITSKLSHLQAEVRKAEALRGRIDDLSVLFEMAEEEDDPDTRAEAESELTAVKKALDEMEVRTLLSGEYDSREALVNIRAEAGGVDAADFAEKLQRMYLRWAEQRGYKTEIYETSYAEEAGIKSTTFAVQVPYAYGTLSVEQGTHRLVRISPFDNQGRRQTSFAGVEILPVVETTDHIEIDESELRVDVYRSSGPGGQGVNTTDSAVRLTHLPTGIVVSCQNERSQIQNKASAMNVLQAKLLDRRRQEEQAKMDALKGDGGNSWGNQMRSYVLHPYQMVKDLRTEYEVGNPEAVFNGEIEGFLEAGIRWRKQQEK</sequence>
<keyword id="KW-0963">Cytoplasm</keyword>
<keyword id="KW-0488">Methylation</keyword>
<keyword id="KW-0648">Protein biosynthesis</keyword>
<keyword id="KW-1185">Reference proteome</keyword>
<protein>
    <recommendedName>
        <fullName evidence="1">Peptide chain release factor 2</fullName>
        <shortName evidence="1">RF-2</shortName>
    </recommendedName>
</protein>
<name>RF2_STRAW</name>